<sequence length="88" mass="10449">MAASRLPPATLTLKQFVRRQQVLLLYRRILQTIRQVPNDSDRKYLKDWAREEFRRNKSATEEDTIRMMITQGNMQLKELEKTLALAKS</sequence>
<protein>
    <recommendedName>
        <fullName>LYR motif-containing protein 2</fullName>
    </recommendedName>
</protein>
<name>LYRM2_HUMAN</name>
<feature type="transit peptide" description="Mitochondrion" evidence="1">
    <location>
        <begin position="1"/>
        <end position="19"/>
    </location>
</feature>
<feature type="chain" id="PRO_0000251175" description="LYR motif-containing protein 2">
    <location>
        <begin position="20"/>
        <end position="88"/>
    </location>
</feature>
<feature type="sequence variant" id="VAR_050417" description="In dbSNP:rs11553069.">
    <original>R</original>
    <variation>W</variation>
    <location>
        <position position="34"/>
    </location>
</feature>
<feature type="sequence variant" id="VAR_034099" description="In dbSNP:rs34012596." evidence="2">
    <original>K</original>
    <variation>E</variation>
    <location>
        <position position="46"/>
    </location>
</feature>
<feature type="sequence variant" id="VAR_050418" description="In dbSNP:rs1055889.">
    <original>T</original>
    <variation>P</variation>
    <location>
        <position position="60"/>
    </location>
</feature>
<comment type="function">
    <text evidence="3">Involved in efficient integration of the N-module into mitochondrial respiratory chain complex I.</text>
</comment>
<comment type="interaction">
    <interactant intactId="EBI-10313813">
        <id>Q9NU23</id>
    </interactant>
    <interactant intactId="EBI-10175124">
        <id>Q8IZU0</id>
        <label>FAM9B</label>
    </interactant>
    <organismsDiffer>false</organismsDiffer>
    <experiments>4</experiments>
</comment>
<comment type="subcellular location">
    <subcellularLocation>
        <location evidence="5">Mitochondrion</location>
    </subcellularLocation>
</comment>
<comment type="similarity">
    <text evidence="4">Belongs to the complex I LYR family.</text>
</comment>
<organism>
    <name type="scientific">Homo sapiens</name>
    <name type="common">Human</name>
    <dbReference type="NCBI Taxonomy" id="9606"/>
    <lineage>
        <taxon>Eukaryota</taxon>
        <taxon>Metazoa</taxon>
        <taxon>Chordata</taxon>
        <taxon>Craniata</taxon>
        <taxon>Vertebrata</taxon>
        <taxon>Euteleostomi</taxon>
        <taxon>Mammalia</taxon>
        <taxon>Eutheria</taxon>
        <taxon>Euarchontoglires</taxon>
        <taxon>Primates</taxon>
        <taxon>Haplorrhini</taxon>
        <taxon>Catarrhini</taxon>
        <taxon>Hominidae</taxon>
        <taxon>Homo</taxon>
    </lineage>
</organism>
<dbReference type="EMBL" id="AK311948">
    <property type="protein sequence ID" value="BAG34889.1"/>
    <property type="molecule type" value="mRNA"/>
</dbReference>
<dbReference type="EMBL" id="CH471051">
    <property type="protein sequence ID" value="EAW48547.1"/>
    <property type="molecule type" value="Genomic_DNA"/>
</dbReference>
<dbReference type="EMBL" id="CH471051">
    <property type="protein sequence ID" value="EAW48549.1"/>
    <property type="molecule type" value="Genomic_DNA"/>
</dbReference>
<dbReference type="EMBL" id="BC009782">
    <property type="protein sequence ID" value="AAH09782.1"/>
    <property type="molecule type" value="mRNA"/>
</dbReference>
<dbReference type="EMBL" id="BC104668">
    <property type="protein sequence ID" value="AAI04669.1"/>
    <property type="molecule type" value="mRNA"/>
</dbReference>
<dbReference type="CCDS" id="CCDS5023.1"/>
<dbReference type="RefSeq" id="NP_065199.1">
    <property type="nucleotide sequence ID" value="NM_020466.5"/>
</dbReference>
<dbReference type="SMR" id="Q9NU23"/>
<dbReference type="BioGRID" id="121461">
    <property type="interactions" value="28"/>
</dbReference>
<dbReference type="FunCoup" id="Q9NU23">
    <property type="interactions" value="972"/>
</dbReference>
<dbReference type="IntAct" id="Q9NU23">
    <property type="interactions" value="18"/>
</dbReference>
<dbReference type="STRING" id="9606.ENSP00000430025"/>
<dbReference type="GlyGen" id="Q9NU23">
    <property type="glycosylation" value="1 site, 1 O-linked glycan (1 site)"/>
</dbReference>
<dbReference type="iPTMnet" id="Q9NU23"/>
<dbReference type="PhosphoSitePlus" id="Q9NU23"/>
<dbReference type="BioMuta" id="LYRM2"/>
<dbReference type="DMDM" id="74734344"/>
<dbReference type="jPOST" id="Q9NU23"/>
<dbReference type="MassIVE" id="Q9NU23"/>
<dbReference type="PaxDb" id="9606-ENSP00000430025"/>
<dbReference type="PeptideAtlas" id="Q9NU23"/>
<dbReference type="ProteomicsDB" id="82650"/>
<dbReference type="Pumba" id="Q9NU23"/>
<dbReference type="TopDownProteomics" id="Q9NU23"/>
<dbReference type="Antibodypedia" id="54908">
    <property type="antibodies" value="114 antibodies from 23 providers"/>
</dbReference>
<dbReference type="DNASU" id="57226"/>
<dbReference type="Ensembl" id="ENST00000523377.2">
    <property type="protein sequence ID" value="ENSP00000430025.1"/>
    <property type="gene ID" value="ENSG00000083099.11"/>
</dbReference>
<dbReference type="GeneID" id="57226"/>
<dbReference type="KEGG" id="hsa:57226"/>
<dbReference type="MANE-Select" id="ENST00000523377.2">
    <property type="protein sequence ID" value="ENSP00000430025.1"/>
    <property type="RefSeq nucleotide sequence ID" value="NM_020466.5"/>
    <property type="RefSeq protein sequence ID" value="NP_065199.1"/>
</dbReference>
<dbReference type="UCSC" id="uc003pnm.4">
    <property type="organism name" value="human"/>
</dbReference>
<dbReference type="AGR" id="HGNC:25229"/>
<dbReference type="CTD" id="57226"/>
<dbReference type="DisGeNET" id="57226"/>
<dbReference type="GeneCards" id="LYRM2"/>
<dbReference type="HGNC" id="HGNC:25229">
    <property type="gene designation" value="LYRM2"/>
</dbReference>
<dbReference type="HPA" id="ENSG00000083099">
    <property type="expression patterns" value="Low tissue specificity"/>
</dbReference>
<dbReference type="neXtProt" id="NX_Q9NU23"/>
<dbReference type="OpenTargets" id="ENSG00000083099"/>
<dbReference type="PharmGKB" id="PA162394751"/>
<dbReference type="VEuPathDB" id="HostDB:ENSG00000083099"/>
<dbReference type="eggNOG" id="ENOG502S8DG">
    <property type="taxonomic scope" value="Eukaryota"/>
</dbReference>
<dbReference type="GeneTree" id="ENSGT00390000002957"/>
<dbReference type="HOGENOM" id="CLU_151409_1_1_1"/>
<dbReference type="InParanoid" id="Q9NU23"/>
<dbReference type="OMA" id="YMRDWAR"/>
<dbReference type="OrthoDB" id="74240at2759"/>
<dbReference type="PAN-GO" id="Q9NU23">
    <property type="GO annotations" value="0 GO annotations based on evolutionary models"/>
</dbReference>
<dbReference type="PhylomeDB" id="Q9NU23"/>
<dbReference type="TreeFam" id="TF323797"/>
<dbReference type="PathwayCommons" id="Q9NU23"/>
<dbReference type="Reactome" id="R-HSA-6799198">
    <property type="pathway name" value="Complex I biogenesis"/>
</dbReference>
<dbReference type="SignaLink" id="Q9NU23"/>
<dbReference type="BioGRID-ORCS" id="57226">
    <property type="hits" value="78 hits in 1154 CRISPR screens"/>
</dbReference>
<dbReference type="ChiTaRS" id="LYRM2">
    <property type="organism name" value="human"/>
</dbReference>
<dbReference type="GenomeRNAi" id="57226"/>
<dbReference type="Pharos" id="Q9NU23">
    <property type="development level" value="Tdark"/>
</dbReference>
<dbReference type="PRO" id="PR:Q9NU23"/>
<dbReference type="Proteomes" id="UP000005640">
    <property type="component" value="Chromosome 6"/>
</dbReference>
<dbReference type="RNAct" id="Q9NU23">
    <property type="molecule type" value="protein"/>
</dbReference>
<dbReference type="Bgee" id="ENSG00000083099">
    <property type="expression patterns" value="Expressed in buccal mucosa cell and 197 other cell types or tissues"/>
</dbReference>
<dbReference type="ExpressionAtlas" id="Q9NU23">
    <property type="expression patterns" value="baseline and differential"/>
</dbReference>
<dbReference type="GO" id="GO:0005739">
    <property type="term" value="C:mitochondrion"/>
    <property type="evidence" value="ECO:0006056"/>
    <property type="project" value="FlyBase"/>
</dbReference>
<dbReference type="GO" id="GO:0032981">
    <property type="term" value="P:mitochondrial respiratory chain complex I assembly"/>
    <property type="evidence" value="ECO:0000315"/>
    <property type="project" value="UniProtKB"/>
</dbReference>
<dbReference type="CDD" id="cd20262">
    <property type="entry name" value="Complex1_LYR_LYRM2"/>
    <property type="match status" value="1"/>
</dbReference>
<dbReference type="InterPro" id="IPR008011">
    <property type="entry name" value="Complex1_LYR_dom"/>
</dbReference>
<dbReference type="InterPro" id="IPR045293">
    <property type="entry name" value="Complex1_LYR_LYRM2"/>
</dbReference>
<dbReference type="PANTHER" id="PTHR13675">
    <property type="entry name" value="LYR MOTIF-CONTAINING PROTEIN 2"/>
    <property type="match status" value="1"/>
</dbReference>
<dbReference type="PANTHER" id="PTHR13675:SF3">
    <property type="entry name" value="LYR MOTIF-CONTAINING PROTEIN 2"/>
    <property type="match status" value="1"/>
</dbReference>
<dbReference type="Pfam" id="PF05347">
    <property type="entry name" value="Complex1_LYR"/>
    <property type="match status" value="1"/>
</dbReference>
<proteinExistence type="evidence at protein level"/>
<gene>
    <name type="primary">LYRM2</name>
</gene>
<evidence type="ECO:0000255" key="1"/>
<evidence type="ECO:0000269" key="2">
    <source>
    </source>
</evidence>
<evidence type="ECO:0000269" key="3">
    <source>
    </source>
</evidence>
<evidence type="ECO:0000305" key="4"/>
<evidence type="ECO:0000305" key="5">
    <source>
    </source>
</evidence>
<accession>Q9NU23</accession>
<accession>B2R4U2</accession>
<accession>E1P517</accession>
<keyword id="KW-0496">Mitochondrion</keyword>
<keyword id="KW-1267">Proteomics identification</keyword>
<keyword id="KW-1185">Reference proteome</keyword>
<keyword id="KW-0809">Transit peptide</keyword>
<reference key="1">
    <citation type="journal article" date="2004" name="Nat. Genet.">
        <title>Complete sequencing and characterization of 21,243 full-length human cDNAs.</title>
        <authorList>
            <person name="Ota T."/>
            <person name="Suzuki Y."/>
            <person name="Nishikawa T."/>
            <person name="Otsuki T."/>
            <person name="Sugiyama T."/>
            <person name="Irie R."/>
            <person name="Wakamatsu A."/>
            <person name="Hayashi K."/>
            <person name="Sato H."/>
            <person name="Nagai K."/>
            <person name="Kimura K."/>
            <person name="Makita H."/>
            <person name="Sekine M."/>
            <person name="Obayashi M."/>
            <person name="Nishi T."/>
            <person name="Shibahara T."/>
            <person name="Tanaka T."/>
            <person name="Ishii S."/>
            <person name="Yamamoto J."/>
            <person name="Saito K."/>
            <person name="Kawai Y."/>
            <person name="Isono Y."/>
            <person name="Nakamura Y."/>
            <person name="Nagahari K."/>
            <person name="Murakami K."/>
            <person name="Yasuda T."/>
            <person name="Iwayanagi T."/>
            <person name="Wagatsuma M."/>
            <person name="Shiratori A."/>
            <person name="Sudo H."/>
            <person name="Hosoiri T."/>
            <person name="Kaku Y."/>
            <person name="Kodaira H."/>
            <person name="Kondo H."/>
            <person name="Sugawara M."/>
            <person name="Takahashi M."/>
            <person name="Kanda K."/>
            <person name="Yokoi T."/>
            <person name="Furuya T."/>
            <person name="Kikkawa E."/>
            <person name="Omura Y."/>
            <person name="Abe K."/>
            <person name="Kamihara K."/>
            <person name="Katsuta N."/>
            <person name="Sato K."/>
            <person name="Tanikawa M."/>
            <person name="Yamazaki M."/>
            <person name="Ninomiya K."/>
            <person name="Ishibashi T."/>
            <person name="Yamashita H."/>
            <person name="Murakawa K."/>
            <person name="Fujimori K."/>
            <person name="Tanai H."/>
            <person name="Kimata M."/>
            <person name="Watanabe M."/>
            <person name="Hiraoka S."/>
            <person name="Chiba Y."/>
            <person name="Ishida S."/>
            <person name="Ono Y."/>
            <person name="Takiguchi S."/>
            <person name="Watanabe S."/>
            <person name="Yosida M."/>
            <person name="Hotuta T."/>
            <person name="Kusano J."/>
            <person name="Kanehori K."/>
            <person name="Takahashi-Fujii A."/>
            <person name="Hara H."/>
            <person name="Tanase T.-O."/>
            <person name="Nomura Y."/>
            <person name="Togiya S."/>
            <person name="Komai F."/>
            <person name="Hara R."/>
            <person name="Takeuchi K."/>
            <person name="Arita M."/>
            <person name="Imose N."/>
            <person name="Musashino K."/>
            <person name="Yuuki H."/>
            <person name="Oshima A."/>
            <person name="Sasaki N."/>
            <person name="Aotsuka S."/>
            <person name="Yoshikawa Y."/>
            <person name="Matsunawa H."/>
            <person name="Ichihara T."/>
            <person name="Shiohata N."/>
            <person name="Sano S."/>
            <person name="Moriya S."/>
            <person name="Momiyama H."/>
            <person name="Satoh N."/>
            <person name="Takami S."/>
            <person name="Terashima Y."/>
            <person name="Suzuki O."/>
            <person name="Nakagawa S."/>
            <person name="Senoh A."/>
            <person name="Mizoguchi H."/>
            <person name="Goto Y."/>
            <person name="Shimizu F."/>
            <person name="Wakebe H."/>
            <person name="Hishigaki H."/>
            <person name="Watanabe T."/>
            <person name="Sugiyama A."/>
            <person name="Takemoto M."/>
            <person name="Kawakami B."/>
            <person name="Yamazaki M."/>
            <person name="Watanabe K."/>
            <person name="Kumagai A."/>
            <person name="Itakura S."/>
            <person name="Fukuzumi Y."/>
            <person name="Fujimori Y."/>
            <person name="Komiyama M."/>
            <person name="Tashiro H."/>
            <person name="Tanigami A."/>
            <person name="Fujiwara T."/>
            <person name="Ono T."/>
            <person name="Yamada K."/>
            <person name="Fujii Y."/>
            <person name="Ozaki K."/>
            <person name="Hirao M."/>
            <person name="Ohmori Y."/>
            <person name="Kawabata A."/>
            <person name="Hikiji T."/>
            <person name="Kobatake N."/>
            <person name="Inagaki H."/>
            <person name="Ikema Y."/>
            <person name="Okamoto S."/>
            <person name="Okitani R."/>
            <person name="Kawakami T."/>
            <person name="Noguchi S."/>
            <person name="Itoh T."/>
            <person name="Shigeta K."/>
            <person name="Senba T."/>
            <person name="Matsumura K."/>
            <person name="Nakajima Y."/>
            <person name="Mizuno T."/>
            <person name="Morinaga M."/>
            <person name="Sasaki M."/>
            <person name="Togashi T."/>
            <person name="Oyama M."/>
            <person name="Hata H."/>
            <person name="Watanabe M."/>
            <person name="Komatsu T."/>
            <person name="Mizushima-Sugano J."/>
            <person name="Satoh T."/>
            <person name="Shirai Y."/>
            <person name="Takahashi Y."/>
            <person name="Nakagawa K."/>
            <person name="Okumura K."/>
            <person name="Nagase T."/>
            <person name="Nomura N."/>
            <person name="Kikuchi H."/>
            <person name="Masuho Y."/>
            <person name="Yamashita R."/>
            <person name="Nakai K."/>
            <person name="Yada T."/>
            <person name="Nakamura Y."/>
            <person name="Ohara O."/>
            <person name="Isogai T."/>
            <person name="Sugano S."/>
        </authorList>
    </citation>
    <scope>NUCLEOTIDE SEQUENCE [LARGE SCALE MRNA]</scope>
    <scope>VARIANT GLU-46</scope>
    <source>
        <tissue>Testis</tissue>
    </source>
</reference>
<reference key="2">
    <citation type="submission" date="2005-09" db="EMBL/GenBank/DDBJ databases">
        <authorList>
            <person name="Mural R.J."/>
            <person name="Istrail S."/>
            <person name="Sutton G.G."/>
            <person name="Florea L."/>
            <person name="Halpern A.L."/>
            <person name="Mobarry C.M."/>
            <person name="Lippert R."/>
            <person name="Walenz B."/>
            <person name="Shatkay H."/>
            <person name="Dew I."/>
            <person name="Miller J.R."/>
            <person name="Flanigan M.J."/>
            <person name="Edwards N.J."/>
            <person name="Bolanos R."/>
            <person name="Fasulo D."/>
            <person name="Halldorsson B.V."/>
            <person name="Hannenhalli S."/>
            <person name="Turner R."/>
            <person name="Yooseph S."/>
            <person name="Lu F."/>
            <person name="Nusskern D.R."/>
            <person name="Shue B.C."/>
            <person name="Zheng X.H."/>
            <person name="Zhong F."/>
            <person name="Delcher A.L."/>
            <person name="Huson D.H."/>
            <person name="Kravitz S.A."/>
            <person name="Mouchard L."/>
            <person name="Reinert K."/>
            <person name="Remington K.A."/>
            <person name="Clark A.G."/>
            <person name="Waterman M.S."/>
            <person name="Eichler E.E."/>
            <person name="Adams M.D."/>
            <person name="Hunkapiller M.W."/>
            <person name="Myers E.W."/>
            <person name="Venter J.C."/>
        </authorList>
    </citation>
    <scope>NUCLEOTIDE SEQUENCE [LARGE SCALE GENOMIC DNA]</scope>
</reference>
<reference key="3">
    <citation type="journal article" date="2004" name="Genome Res.">
        <title>The status, quality, and expansion of the NIH full-length cDNA project: the Mammalian Gene Collection (MGC).</title>
        <authorList>
            <consortium name="The MGC Project Team"/>
        </authorList>
    </citation>
    <scope>NUCLEOTIDE SEQUENCE [LARGE SCALE MRNA]</scope>
    <source>
        <tissue>Gall bladder</tissue>
    </source>
</reference>
<reference key="4">
    <citation type="journal article" date="2011" name="BMC Syst. Biol.">
        <title>Initial characterization of the human central proteome.</title>
        <authorList>
            <person name="Burkard T.R."/>
            <person name="Planyavsky M."/>
            <person name="Kaupe I."/>
            <person name="Breitwieser F.P."/>
            <person name="Buerckstuemmer T."/>
            <person name="Bennett K.L."/>
            <person name="Superti-Furga G."/>
            <person name="Colinge J."/>
        </authorList>
    </citation>
    <scope>IDENTIFICATION BY MASS SPECTROMETRY [LARGE SCALE ANALYSIS]</scope>
</reference>
<reference key="5">
    <citation type="journal article" date="2015" name="Proteomics">
        <title>N-terminome analysis of the human mitochondrial proteome.</title>
        <authorList>
            <person name="Vaca Jacome A.S."/>
            <person name="Rabilloud T."/>
            <person name="Schaeffer-Reiss C."/>
            <person name="Rompais M."/>
            <person name="Ayoub D."/>
            <person name="Lane L."/>
            <person name="Bairoch A."/>
            <person name="Van Dorsselaer A."/>
            <person name="Carapito C."/>
        </authorList>
    </citation>
    <scope>IDENTIFICATION BY MASS SPECTROMETRY [LARGE SCALE ANALYSIS]</scope>
</reference>
<reference key="6">
    <citation type="journal article" date="2020" name="Mol. Cell. Proteomics">
        <title>The mitochondrial acyl-carrier protein interaction network highlights important roles for LYRM family members in complex I and mitoribosome assembly.</title>
        <authorList>
            <person name="Dibley M.G."/>
            <person name="Formosa L.E."/>
            <person name="Lyu B."/>
            <person name="Reljic B."/>
            <person name="McGann D."/>
            <person name="Muellner-Wong L."/>
            <person name="Kraus F."/>
            <person name="Sharpe A.J."/>
            <person name="Stroud D.A."/>
            <person name="Ryan M.T."/>
        </authorList>
    </citation>
    <scope>FUNCTION</scope>
    <scope>SUBCELLULAR LOCATION</scope>
</reference>